<evidence type="ECO:0000255" key="1">
    <source>
        <dbReference type="HAMAP-Rule" id="MF_01376"/>
    </source>
</evidence>
<accession>B5EXH1</accession>
<gene>
    <name evidence="1" type="primary">phnW</name>
    <name type="ordered locus">SeAg_B0470</name>
</gene>
<reference key="1">
    <citation type="journal article" date="2011" name="J. Bacteriol.">
        <title>Comparative genomics of 28 Salmonella enterica isolates: evidence for CRISPR-mediated adaptive sublineage evolution.</title>
        <authorList>
            <person name="Fricke W.F."/>
            <person name="Mammel M.K."/>
            <person name="McDermott P.F."/>
            <person name="Tartera C."/>
            <person name="White D.G."/>
            <person name="Leclerc J.E."/>
            <person name="Ravel J."/>
            <person name="Cebula T.A."/>
        </authorList>
    </citation>
    <scope>NUCLEOTIDE SEQUENCE [LARGE SCALE GENOMIC DNA]</scope>
    <source>
        <strain>SL483</strain>
    </source>
</reference>
<keyword id="KW-0032">Aminotransferase</keyword>
<keyword id="KW-0663">Pyridoxal phosphate</keyword>
<keyword id="KW-0670">Pyruvate</keyword>
<keyword id="KW-0808">Transferase</keyword>
<comment type="function">
    <text evidence="1">Involved in phosphonate degradation.</text>
</comment>
<comment type="catalytic activity">
    <reaction evidence="1">
        <text>(2-aminoethyl)phosphonate + pyruvate = phosphonoacetaldehyde + L-alanine</text>
        <dbReference type="Rhea" id="RHEA:17021"/>
        <dbReference type="ChEBI" id="CHEBI:15361"/>
        <dbReference type="ChEBI" id="CHEBI:57418"/>
        <dbReference type="ChEBI" id="CHEBI:57972"/>
        <dbReference type="ChEBI" id="CHEBI:58383"/>
        <dbReference type="EC" id="2.6.1.37"/>
    </reaction>
</comment>
<comment type="cofactor">
    <cofactor evidence="1">
        <name>pyridoxal 5'-phosphate</name>
        <dbReference type="ChEBI" id="CHEBI:597326"/>
    </cofactor>
</comment>
<comment type="subunit">
    <text evidence="1">Homodimer.</text>
</comment>
<comment type="similarity">
    <text evidence="1">Belongs to the class-V pyridoxal-phosphate-dependent aminotransferase family. PhnW subfamily.</text>
</comment>
<organism>
    <name type="scientific">Salmonella agona (strain SL483)</name>
    <dbReference type="NCBI Taxonomy" id="454166"/>
    <lineage>
        <taxon>Bacteria</taxon>
        <taxon>Pseudomonadati</taxon>
        <taxon>Pseudomonadota</taxon>
        <taxon>Gammaproteobacteria</taxon>
        <taxon>Enterobacterales</taxon>
        <taxon>Enterobacteriaceae</taxon>
        <taxon>Salmonella</taxon>
    </lineage>
</organism>
<name>PHNW_SALA4</name>
<sequence length="367" mass="40344">MTSRNYLLLTPGPLTTSRTVKEAMLFDSCTWDDDYNIGVVEQIRQQLTALATASEGYTSVLLQGSGSYAVEAVLGSALGPQDKVLIVSNGAYGARMVEMSGLMGIAHHAYDCGEVARPDVQAIDAILNADPTISHIAMVHSETTTGMLNPIDEVGALAHRYGKTYIVDAMSSFGGIPMDIATLHIDYLISSANKCIQGVPGFAFVIAREQKLAACKGRSRSLSLDLYAQWRCMEDNHGKWRFTSPTHTVLAFAQALKELAKEGGVAARHQRYQQNQRSLVAGMRALGFNTLLDDELHSPIITAFYSPEDPQYRFSEFYRRLKEQGFVIYPGKVSQSDCFRIGNIGEVYAADITALLTAIRTAMYWMK</sequence>
<feature type="chain" id="PRO_1000144854" description="2-aminoethylphosphonate--pyruvate transaminase">
    <location>
        <begin position="1"/>
        <end position="367"/>
    </location>
</feature>
<feature type="modified residue" description="N6-(pyridoxal phosphate)lysine" evidence="1">
    <location>
        <position position="194"/>
    </location>
</feature>
<proteinExistence type="inferred from homology"/>
<protein>
    <recommendedName>
        <fullName evidence="1">2-aminoethylphosphonate--pyruvate transaminase</fullName>
        <ecNumber evidence="1">2.6.1.37</ecNumber>
    </recommendedName>
    <alternativeName>
        <fullName evidence="1">2-aminoethylphosphonate aminotransferase</fullName>
    </alternativeName>
    <alternativeName>
        <fullName evidence="1">AEP transaminase</fullName>
        <shortName evidence="1">AEPT</shortName>
    </alternativeName>
</protein>
<dbReference type="EC" id="2.6.1.37" evidence="1"/>
<dbReference type="EMBL" id="CP001138">
    <property type="protein sequence ID" value="ACH49462.1"/>
    <property type="molecule type" value="Genomic_DNA"/>
</dbReference>
<dbReference type="RefSeq" id="WP_000203966.1">
    <property type="nucleotide sequence ID" value="NC_011149.1"/>
</dbReference>
<dbReference type="SMR" id="B5EXH1"/>
<dbReference type="KEGG" id="sea:SeAg_B0470"/>
<dbReference type="HOGENOM" id="CLU_027686_3_1_6"/>
<dbReference type="Proteomes" id="UP000008819">
    <property type="component" value="Chromosome"/>
</dbReference>
<dbReference type="GO" id="GO:0047304">
    <property type="term" value="F:2-aminoethylphosphonate-pyruvate transaminase activity"/>
    <property type="evidence" value="ECO:0007669"/>
    <property type="project" value="UniProtKB-UniRule"/>
</dbReference>
<dbReference type="GO" id="GO:0019700">
    <property type="term" value="P:organic phosphonate catabolic process"/>
    <property type="evidence" value="ECO:0007669"/>
    <property type="project" value="InterPro"/>
</dbReference>
<dbReference type="Gene3D" id="3.90.1150.10">
    <property type="entry name" value="Aspartate Aminotransferase, domain 1"/>
    <property type="match status" value="1"/>
</dbReference>
<dbReference type="Gene3D" id="3.40.640.10">
    <property type="entry name" value="Type I PLP-dependent aspartate aminotransferase-like (Major domain)"/>
    <property type="match status" value="1"/>
</dbReference>
<dbReference type="HAMAP" id="MF_01376">
    <property type="entry name" value="PhnW_aminotrans_5"/>
    <property type="match status" value="1"/>
</dbReference>
<dbReference type="InterPro" id="IPR000192">
    <property type="entry name" value="Aminotrans_V_dom"/>
</dbReference>
<dbReference type="InterPro" id="IPR012703">
    <property type="entry name" value="NH2EtPonate_pyrv_transaminase"/>
</dbReference>
<dbReference type="InterPro" id="IPR015424">
    <property type="entry name" value="PyrdxlP-dep_Trfase"/>
</dbReference>
<dbReference type="InterPro" id="IPR015421">
    <property type="entry name" value="PyrdxlP-dep_Trfase_major"/>
</dbReference>
<dbReference type="InterPro" id="IPR015422">
    <property type="entry name" value="PyrdxlP-dep_Trfase_small"/>
</dbReference>
<dbReference type="InterPro" id="IPR024169">
    <property type="entry name" value="SP_NH2Trfase/AEP_transaminase"/>
</dbReference>
<dbReference type="NCBIfam" id="TIGR03301">
    <property type="entry name" value="PhnW-AepZ"/>
    <property type="match status" value="1"/>
</dbReference>
<dbReference type="NCBIfam" id="NF010006">
    <property type="entry name" value="PRK13479.1"/>
    <property type="match status" value="1"/>
</dbReference>
<dbReference type="NCBIfam" id="TIGR02326">
    <property type="entry name" value="transamin_PhnW"/>
    <property type="match status" value="1"/>
</dbReference>
<dbReference type="PANTHER" id="PTHR42778">
    <property type="entry name" value="2-AMINOETHYLPHOSPHONATE--PYRUVATE TRANSAMINASE"/>
    <property type="match status" value="1"/>
</dbReference>
<dbReference type="PANTHER" id="PTHR42778:SF1">
    <property type="entry name" value="2-AMINOETHYLPHOSPHONATE--PYRUVATE TRANSAMINASE"/>
    <property type="match status" value="1"/>
</dbReference>
<dbReference type="Pfam" id="PF00266">
    <property type="entry name" value="Aminotran_5"/>
    <property type="match status" value="1"/>
</dbReference>
<dbReference type="PIRSF" id="PIRSF000524">
    <property type="entry name" value="SPT"/>
    <property type="match status" value="1"/>
</dbReference>
<dbReference type="SUPFAM" id="SSF53383">
    <property type="entry name" value="PLP-dependent transferases"/>
    <property type="match status" value="1"/>
</dbReference>